<feature type="chain" id="PRO_0000409249" description="Pheromone-regulated membrane protein 10">
    <location>
        <begin position="1"/>
        <end position="740"/>
    </location>
</feature>
<feature type="transmembrane region" description="Helical" evidence="1">
    <location>
        <begin position="422"/>
        <end position="442"/>
    </location>
</feature>
<feature type="transmembrane region" description="Helical" evidence="1">
    <location>
        <begin position="445"/>
        <end position="465"/>
    </location>
</feature>
<feature type="transmembrane region" description="Helical" evidence="1">
    <location>
        <begin position="475"/>
        <end position="495"/>
    </location>
</feature>
<feature type="transmembrane region" description="Helical" evidence="1">
    <location>
        <begin position="499"/>
        <end position="519"/>
    </location>
</feature>
<feature type="transmembrane region" description="Helical" evidence="1">
    <location>
        <begin position="541"/>
        <end position="561"/>
    </location>
</feature>
<feature type="transmembrane region" description="Helical" evidence="1">
    <location>
        <begin position="574"/>
        <end position="594"/>
    </location>
</feature>
<feature type="transmembrane region" description="Helical" evidence="1">
    <location>
        <begin position="599"/>
        <end position="619"/>
    </location>
</feature>
<feature type="transmembrane region" description="Helical" evidence="1">
    <location>
        <begin position="622"/>
        <end position="642"/>
    </location>
</feature>
<feature type="transmembrane region" description="Helical" evidence="1">
    <location>
        <begin position="651"/>
        <end position="671"/>
    </location>
</feature>
<feature type="transmembrane region" description="Helical" evidence="1">
    <location>
        <begin position="707"/>
        <end position="727"/>
    </location>
</feature>
<feature type="region of interest" description="Disordered" evidence="2">
    <location>
        <begin position="1"/>
        <end position="48"/>
    </location>
</feature>
<feature type="region of interest" description="Disordered" evidence="2">
    <location>
        <begin position="65"/>
        <end position="97"/>
    </location>
</feature>
<feature type="region of interest" description="Disordered" evidence="2">
    <location>
        <begin position="241"/>
        <end position="269"/>
    </location>
</feature>
<feature type="compositionally biased region" description="Basic and acidic residues" evidence="2">
    <location>
        <begin position="7"/>
        <end position="18"/>
    </location>
</feature>
<feature type="compositionally biased region" description="Low complexity" evidence="2">
    <location>
        <begin position="19"/>
        <end position="33"/>
    </location>
</feature>
<feature type="compositionally biased region" description="Acidic residues" evidence="2">
    <location>
        <begin position="67"/>
        <end position="76"/>
    </location>
</feature>
<feature type="compositionally biased region" description="Polar residues" evidence="2">
    <location>
        <begin position="256"/>
        <end position="267"/>
    </location>
</feature>
<comment type="subcellular location">
    <subcellularLocation>
        <location>Membrane</location>
        <topology>Multi-pass membrane protein</topology>
    </subcellularLocation>
</comment>
<comment type="similarity">
    <text evidence="3">Belongs to the ThrE exporter (TC 2.A.79) family.</text>
</comment>
<organism>
    <name type="scientific">Eremothecium gossypii (strain ATCC 10895 / CBS 109.51 / FGSC 9923 / NRRL Y-1056)</name>
    <name type="common">Yeast</name>
    <name type="synonym">Ashbya gossypii</name>
    <dbReference type="NCBI Taxonomy" id="284811"/>
    <lineage>
        <taxon>Eukaryota</taxon>
        <taxon>Fungi</taxon>
        <taxon>Dikarya</taxon>
        <taxon>Ascomycota</taxon>
        <taxon>Saccharomycotina</taxon>
        <taxon>Saccharomycetes</taxon>
        <taxon>Saccharomycetales</taxon>
        <taxon>Saccharomycetaceae</taxon>
        <taxon>Eremothecium</taxon>
    </lineage>
</organism>
<proteinExistence type="inferred from homology"/>
<dbReference type="EMBL" id="AE016819">
    <property type="protein sequence ID" value="AAS53446.1"/>
    <property type="molecule type" value="Genomic_DNA"/>
</dbReference>
<dbReference type="RefSeq" id="NP_985622.1">
    <property type="nucleotide sequence ID" value="NM_210976.1"/>
</dbReference>
<dbReference type="FunCoup" id="Q754J7">
    <property type="interactions" value="44"/>
</dbReference>
<dbReference type="EnsemblFungi" id="AAS53446">
    <property type="protein sequence ID" value="AAS53446"/>
    <property type="gene ID" value="AGOS_AFR075C"/>
</dbReference>
<dbReference type="GeneID" id="4621864"/>
<dbReference type="KEGG" id="ago:AGOS_AFR075C"/>
<dbReference type="eggNOG" id="ENOG502QPMM">
    <property type="taxonomic scope" value="Eukaryota"/>
</dbReference>
<dbReference type="HOGENOM" id="CLU_007078_1_1_1"/>
<dbReference type="InParanoid" id="Q754J7"/>
<dbReference type="OMA" id="MTLISCC"/>
<dbReference type="OrthoDB" id="413008at2759"/>
<dbReference type="Proteomes" id="UP000000591">
    <property type="component" value="Chromosome VI"/>
</dbReference>
<dbReference type="GO" id="GO:0016020">
    <property type="term" value="C:membrane"/>
    <property type="evidence" value="ECO:0007669"/>
    <property type="project" value="UniProtKB-SubCell"/>
</dbReference>
<dbReference type="GO" id="GO:0022857">
    <property type="term" value="F:transmembrane transporter activity"/>
    <property type="evidence" value="ECO:0007669"/>
    <property type="project" value="InterPro"/>
</dbReference>
<dbReference type="InterPro" id="IPR010619">
    <property type="entry name" value="ThrE-like_N"/>
</dbReference>
<dbReference type="InterPro" id="IPR051361">
    <property type="entry name" value="ThrE/Ser_Exporter"/>
</dbReference>
<dbReference type="InterPro" id="IPR024528">
    <property type="entry name" value="ThrE_2"/>
</dbReference>
<dbReference type="PANTHER" id="PTHR31082">
    <property type="entry name" value="PHEROMONE-REGULATED MEMBRANE PROTEIN 10"/>
    <property type="match status" value="1"/>
</dbReference>
<dbReference type="PANTHER" id="PTHR31082:SF4">
    <property type="entry name" value="PHEROMONE-REGULATED MEMBRANE PROTEIN 10"/>
    <property type="match status" value="1"/>
</dbReference>
<dbReference type="Pfam" id="PF06738">
    <property type="entry name" value="ThrE"/>
    <property type="match status" value="1"/>
</dbReference>
<dbReference type="Pfam" id="PF12821">
    <property type="entry name" value="ThrE_2"/>
    <property type="match status" value="1"/>
</dbReference>
<sequence length="740" mass="80702">MGKNKKQAAEGEEARRGSESSGSSAEPSGAVAELPSFKKTAGGARSGLIEQDAVDTIREQTAVKFADEDEVVEQDEAAQKTEAVASESSSLADKEECDESKLDHFRKFFRRTSSRSSDEGEGGGMMERFINMTGGGMVPVVTEAPEEDEEAGPDPTAEAEAAAREIMKAHHLSSGQSVDMMSMSSSGESGFFMPVAEHYDDEYNPEQEEEQRDDMSEATYVPPPQHVRGGVLGSLLRLYQNQPGGQAPQRPGLRKSAQTLSSETLPTGESYEMPKFKAKRPRGSKIPNPIKLKRKSAMSEARITVHIADLLQRHRFILRLCKAFMMYGAPTHRLEEYMVMTSRVLEIDSQFLYLPGCMVVSFGDTITRTSEVQLVRCSQGLNLWKLHQVHSIYKQVVHDIISVEDASRTIETIMAEKNLYPAWMCVLLYGFCASMVTPFAFGGDWINLVVSFGIGCCVGLLQFIVAQRSHVYSNVFEITASIVVSFCARALGSIPNSNICFGSTVQGSLALILPGYIILCGSLELQSRSLVAGSVRMFYAIIYSLFLGFGITLGAALFGWIYRDATNETVCEKELSPWFRFIFVPGFALGLSLINQARWSQIPVMVCIACSGYVVTYWSGQHFTASTEFTASIGAFVIGIMGNLYSRIWKGLAMTAMLPGIFVQVPSGIASKSTLLSSVQSANNMVSNGTNAAVNSVDGRTSISFGITMIQVCIGISVGLFASTLVVYPFGKKRTGLFTL</sequence>
<evidence type="ECO:0000255" key="1"/>
<evidence type="ECO:0000256" key="2">
    <source>
        <dbReference type="SAM" id="MobiDB-lite"/>
    </source>
</evidence>
<evidence type="ECO:0000305" key="3"/>
<accession>Q754J7</accession>
<keyword id="KW-0472">Membrane</keyword>
<keyword id="KW-1185">Reference proteome</keyword>
<keyword id="KW-0812">Transmembrane</keyword>
<keyword id="KW-1133">Transmembrane helix</keyword>
<gene>
    <name type="ordered locus">AFR075C</name>
</gene>
<reference key="1">
    <citation type="journal article" date="2004" name="Science">
        <title>The Ashbya gossypii genome as a tool for mapping the ancient Saccharomyces cerevisiae genome.</title>
        <authorList>
            <person name="Dietrich F.S."/>
            <person name="Voegeli S."/>
            <person name="Brachat S."/>
            <person name="Lerch A."/>
            <person name="Gates K."/>
            <person name="Steiner S."/>
            <person name="Mohr C."/>
            <person name="Poehlmann R."/>
            <person name="Luedi P."/>
            <person name="Choi S."/>
            <person name="Wing R.A."/>
            <person name="Flavier A."/>
            <person name="Gaffney T.D."/>
            <person name="Philippsen P."/>
        </authorList>
    </citation>
    <scope>NUCLEOTIDE SEQUENCE [LARGE SCALE GENOMIC DNA]</scope>
    <source>
        <strain>ATCC 10895 / CBS 109.51 / FGSC 9923 / NRRL Y-1056</strain>
    </source>
</reference>
<reference key="2">
    <citation type="journal article" date="2013" name="G3 (Bethesda)">
        <title>Genomes of Ashbya fungi isolated from insects reveal four mating-type loci, numerous translocations, lack of transposons, and distinct gene duplications.</title>
        <authorList>
            <person name="Dietrich F.S."/>
            <person name="Voegeli S."/>
            <person name="Kuo S."/>
            <person name="Philippsen P."/>
        </authorList>
    </citation>
    <scope>GENOME REANNOTATION</scope>
    <source>
        <strain>ATCC 10895 / CBS 109.51 / FGSC 9923 / NRRL Y-1056</strain>
    </source>
</reference>
<protein>
    <recommendedName>
        <fullName>Pheromone-regulated membrane protein 10</fullName>
    </recommendedName>
</protein>
<name>PRM10_EREGS</name>